<protein>
    <recommendedName>
        <fullName evidence="1">DNA-directed RNA polymerase subunit alpha</fullName>
        <shortName evidence="1">PEP</shortName>
        <ecNumber evidence="1">2.7.7.6</ecNumber>
    </recommendedName>
    <alternativeName>
        <fullName evidence="1">Plastid-encoded RNA polymerase subunit alpha</fullName>
        <shortName evidence="1">RNA polymerase subunit alpha</shortName>
    </alternativeName>
</protein>
<dbReference type="EC" id="2.7.7.6" evidence="1"/>
<dbReference type="EMBL" id="EF380352">
    <property type="protein sequence ID" value="ABQ43291.1"/>
    <property type="molecule type" value="Genomic_DNA"/>
</dbReference>
<dbReference type="RefSeq" id="YP_001294130.1">
    <property type="nucleotide sequence ID" value="NC_009598.1"/>
</dbReference>
<dbReference type="SMR" id="A6MMF4"/>
<dbReference type="GeneID" id="5236509"/>
<dbReference type="GO" id="GO:0009507">
    <property type="term" value="C:chloroplast"/>
    <property type="evidence" value="ECO:0007669"/>
    <property type="project" value="UniProtKB-SubCell"/>
</dbReference>
<dbReference type="GO" id="GO:0000428">
    <property type="term" value="C:DNA-directed RNA polymerase complex"/>
    <property type="evidence" value="ECO:0007669"/>
    <property type="project" value="UniProtKB-KW"/>
</dbReference>
<dbReference type="GO" id="GO:0005739">
    <property type="term" value="C:mitochondrion"/>
    <property type="evidence" value="ECO:0007669"/>
    <property type="project" value="GOC"/>
</dbReference>
<dbReference type="GO" id="GO:0003677">
    <property type="term" value="F:DNA binding"/>
    <property type="evidence" value="ECO:0007669"/>
    <property type="project" value="UniProtKB-UniRule"/>
</dbReference>
<dbReference type="GO" id="GO:0003899">
    <property type="term" value="F:DNA-directed RNA polymerase activity"/>
    <property type="evidence" value="ECO:0007669"/>
    <property type="project" value="UniProtKB-UniRule"/>
</dbReference>
<dbReference type="GO" id="GO:0046983">
    <property type="term" value="F:protein dimerization activity"/>
    <property type="evidence" value="ECO:0007669"/>
    <property type="project" value="InterPro"/>
</dbReference>
<dbReference type="GO" id="GO:0006351">
    <property type="term" value="P:DNA-templated transcription"/>
    <property type="evidence" value="ECO:0007669"/>
    <property type="project" value="UniProtKB-UniRule"/>
</dbReference>
<dbReference type="CDD" id="cd06928">
    <property type="entry name" value="RNAP_alpha_NTD"/>
    <property type="match status" value="1"/>
</dbReference>
<dbReference type="FunFam" id="2.170.120.12:FF:000001">
    <property type="entry name" value="DNA-directed RNA polymerase subunit alpha"/>
    <property type="match status" value="1"/>
</dbReference>
<dbReference type="FunFam" id="3.30.1360.10:FF:000039">
    <property type="entry name" value="DNA-directed RNA polymerase subunit alpha"/>
    <property type="match status" value="1"/>
</dbReference>
<dbReference type="Gene3D" id="1.10.150.20">
    <property type="entry name" value="5' to 3' exonuclease, C-terminal subdomain"/>
    <property type="match status" value="1"/>
</dbReference>
<dbReference type="Gene3D" id="2.170.120.12">
    <property type="entry name" value="DNA-directed RNA polymerase, insert domain"/>
    <property type="match status" value="1"/>
</dbReference>
<dbReference type="Gene3D" id="3.30.1360.10">
    <property type="entry name" value="RNA polymerase, RBP11-like subunit"/>
    <property type="match status" value="1"/>
</dbReference>
<dbReference type="HAMAP" id="MF_00059">
    <property type="entry name" value="RNApol_bact_RpoA"/>
    <property type="match status" value="1"/>
</dbReference>
<dbReference type="InterPro" id="IPR011262">
    <property type="entry name" value="DNA-dir_RNA_pol_insert"/>
</dbReference>
<dbReference type="InterPro" id="IPR011263">
    <property type="entry name" value="DNA-dir_RNA_pol_RpoA/D/Rpb3"/>
</dbReference>
<dbReference type="InterPro" id="IPR011773">
    <property type="entry name" value="DNA-dir_RpoA"/>
</dbReference>
<dbReference type="InterPro" id="IPR036603">
    <property type="entry name" value="RBP11-like"/>
</dbReference>
<dbReference type="InterPro" id="IPR011260">
    <property type="entry name" value="RNAP_asu_C"/>
</dbReference>
<dbReference type="InterPro" id="IPR036643">
    <property type="entry name" value="RNApol_insert_sf"/>
</dbReference>
<dbReference type="NCBIfam" id="TIGR02027">
    <property type="entry name" value="rpoA"/>
    <property type="match status" value="1"/>
</dbReference>
<dbReference type="Pfam" id="PF01000">
    <property type="entry name" value="RNA_pol_A_bac"/>
    <property type="match status" value="1"/>
</dbReference>
<dbReference type="Pfam" id="PF03118">
    <property type="entry name" value="RNA_pol_A_CTD"/>
    <property type="match status" value="1"/>
</dbReference>
<dbReference type="Pfam" id="PF01193">
    <property type="entry name" value="RNA_pol_L"/>
    <property type="match status" value="1"/>
</dbReference>
<dbReference type="SMART" id="SM00662">
    <property type="entry name" value="RPOLD"/>
    <property type="match status" value="1"/>
</dbReference>
<dbReference type="SUPFAM" id="SSF47789">
    <property type="entry name" value="C-terminal domain of RNA polymerase alpha subunit"/>
    <property type="match status" value="1"/>
</dbReference>
<dbReference type="SUPFAM" id="SSF56553">
    <property type="entry name" value="Insert subdomain of RNA polymerase alpha subunit"/>
    <property type="match status" value="1"/>
</dbReference>
<dbReference type="SUPFAM" id="SSF55257">
    <property type="entry name" value="RBP11-like subunits of RNA polymerase"/>
    <property type="match status" value="1"/>
</dbReference>
<gene>
    <name evidence="1" type="primary">rpoA</name>
</gene>
<accession>A6MMF4</accession>
<proteinExistence type="inferred from homology"/>
<feature type="chain" id="PRO_0000323666" description="DNA-directed RNA polymerase subunit alpha">
    <location>
        <begin position="1"/>
        <end position="334"/>
    </location>
</feature>
<feature type="region of interest" description="Alpha N-terminal domain (alpha-NTD)" evidence="1">
    <location>
        <begin position="1"/>
        <end position="232"/>
    </location>
</feature>
<feature type="region of interest" description="Alpha C-terminal domain (alpha-CTD)" evidence="1">
    <location>
        <begin position="268"/>
        <end position="334"/>
    </location>
</feature>
<name>RPOA_CHLSC</name>
<comment type="function">
    <text evidence="1">DNA-dependent RNA polymerase catalyzes the transcription of DNA into RNA using the four ribonucleoside triphosphates as substrates.</text>
</comment>
<comment type="catalytic activity">
    <reaction evidence="1">
        <text>RNA(n) + a ribonucleoside 5'-triphosphate = RNA(n+1) + diphosphate</text>
        <dbReference type="Rhea" id="RHEA:21248"/>
        <dbReference type="Rhea" id="RHEA-COMP:14527"/>
        <dbReference type="Rhea" id="RHEA-COMP:17342"/>
        <dbReference type="ChEBI" id="CHEBI:33019"/>
        <dbReference type="ChEBI" id="CHEBI:61557"/>
        <dbReference type="ChEBI" id="CHEBI:140395"/>
        <dbReference type="EC" id="2.7.7.6"/>
    </reaction>
</comment>
<comment type="subunit">
    <text evidence="1">In plastids the minimal PEP RNA polymerase catalytic core is composed of four subunits: alpha, beta, beta', and beta''. When a (nuclear-encoded) sigma factor is associated with the core the holoenzyme is formed, which can initiate transcription.</text>
</comment>
<comment type="subcellular location">
    <subcellularLocation>
        <location>Plastid</location>
        <location>Chloroplast</location>
    </subcellularLocation>
</comment>
<comment type="domain">
    <text evidence="1">The N-terminal domain is essential for RNAP assembly and basal transcription, whereas the C-terminal domain is involved in interaction with transcriptional regulators and with upstream promoter elements.</text>
</comment>
<comment type="similarity">
    <text evidence="1">Belongs to the RNA polymerase alpha chain family.</text>
</comment>
<keyword id="KW-0150">Chloroplast</keyword>
<keyword id="KW-0240">DNA-directed RNA polymerase</keyword>
<keyword id="KW-0548">Nucleotidyltransferase</keyword>
<keyword id="KW-0934">Plastid</keyword>
<keyword id="KW-0804">Transcription</keyword>
<keyword id="KW-0808">Transferase</keyword>
<reference key="1">
    <citation type="journal article" date="2007" name="Mol. Phylogenet. Evol.">
        <title>Phylogenetic and evolutionary implications of complete chloroplast genome sequences of four early-diverging angiosperms: Buxus (Buxaceae), Chloranthus (Chloranthaceae), Dioscorea (Dioscoreaceae), and Illicium (Schisandraceae).</title>
        <authorList>
            <person name="Hansen D.R."/>
            <person name="Dastidar S.G."/>
            <person name="Cai Z."/>
            <person name="Penaflor C."/>
            <person name="Kuehl J.V."/>
            <person name="Boore J.L."/>
            <person name="Jansen R.K."/>
        </authorList>
    </citation>
    <scope>NUCLEOTIDE SEQUENCE [LARGE SCALE GENOMIC DNA]</scope>
</reference>
<evidence type="ECO:0000255" key="1">
    <source>
        <dbReference type="HAMAP-Rule" id="MF_00059"/>
    </source>
</evidence>
<sequence length="334" mass="38408">MVREEIAVSTRTLQWKCVESRADSKRLYYGRFMLSPLMKGQADTIGIAMRRALLGEIEGTCITRAKLDKVPHEYSTIVGIEESIHEIFMNLKEIVLRSNLYGTRNASICVRGPRYVTAQDIISPPSVEIVDTTQHIASLTEPIDLCIELQIQRDRGYRMKTPNKYQNGSYPIDAVSMPVRNANHSIHSYGNGNEKQEILFLEIWTNGSLTPKEALHEASRNLIDLFIPFLHAEEEGIRLEDNPNRFNIPFFTFHDGLANTNIRKKKKGIALKCIFIDQSELPPRTYNYLKRSNINTLLDLLSNSQEDFLKIEHFRIEDVKQILDILQKHFTIDC</sequence>
<organism>
    <name type="scientific">Chloranthus spicatus</name>
    <name type="common">Chulantree</name>
    <name type="synonym">Nigrina spicata</name>
    <dbReference type="NCBI Taxonomy" id="13006"/>
    <lineage>
        <taxon>Eukaryota</taxon>
        <taxon>Viridiplantae</taxon>
        <taxon>Streptophyta</taxon>
        <taxon>Embryophyta</taxon>
        <taxon>Tracheophyta</taxon>
        <taxon>Spermatophyta</taxon>
        <taxon>Magnoliopsida</taxon>
        <taxon>Chloranthales</taxon>
        <taxon>Chloranthaceae</taxon>
        <taxon>Chloranthus</taxon>
    </lineage>
</organism>
<geneLocation type="chloroplast"/>